<protein>
    <recommendedName>
        <fullName evidence="1">Aspartate carbamoyltransferase catalytic subunit</fullName>
        <ecNumber evidence="1">2.1.3.2</ecNumber>
    </recommendedName>
    <alternativeName>
        <fullName evidence="1">Aspartate transcarbamylase</fullName>
        <shortName evidence="1">ATCase</shortName>
    </alternativeName>
</protein>
<reference key="1">
    <citation type="journal article" date="2006" name="PLoS Genet.">
        <title>The complete genome sequence and comparative genome analysis of the high pathogenicity Yersinia enterocolitica strain 8081.</title>
        <authorList>
            <person name="Thomson N.R."/>
            <person name="Howard S."/>
            <person name="Wren B.W."/>
            <person name="Holden M.T.G."/>
            <person name="Crossman L."/>
            <person name="Challis G.L."/>
            <person name="Churcher C."/>
            <person name="Mungall K."/>
            <person name="Brooks K."/>
            <person name="Chillingworth T."/>
            <person name="Feltwell T."/>
            <person name="Abdellah Z."/>
            <person name="Hauser H."/>
            <person name="Jagels K."/>
            <person name="Maddison M."/>
            <person name="Moule S."/>
            <person name="Sanders M."/>
            <person name="Whitehead S."/>
            <person name="Quail M.A."/>
            <person name="Dougan G."/>
            <person name="Parkhill J."/>
            <person name="Prentice M.B."/>
        </authorList>
    </citation>
    <scope>NUCLEOTIDE SEQUENCE [LARGE SCALE GENOMIC DNA]</scope>
    <source>
        <strain>NCTC 13174 / 8081</strain>
    </source>
</reference>
<sequence length="311" mass="34441">MVNPLYHKHIISINDLCREELELVLRTAASLKSHPQPELLKHKVIASCFFEASTRTRLSFETSIHRLGASVVGFSDSSNTSLGKKGETLADTMSVISTYVDAIVMRHPQEGAARLATQFSGNVPVVNAGDGANQHPTQTLLDLFTIQETQGRLDNINIAMVGDLKYGRTVHSLTQALAKFNGNRFFFIAPDALAMPAYLLEMLAEKGIEYSLHESIEEVVPELDILYMTRVQKERLDPSEYANVKAQFVLRAADLNGAQDNLKVLHPLPRIDEITTDVDKTPYAYYFQQAGNGIFARQALLALVLNAELAL</sequence>
<organism>
    <name type="scientific">Yersinia enterocolitica serotype O:8 / biotype 1B (strain NCTC 13174 / 8081)</name>
    <dbReference type="NCBI Taxonomy" id="393305"/>
    <lineage>
        <taxon>Bacteria</taxon>
        <taxon>Pseudomonadati</taxon>
        <taxon>Pseudomonadota</taxon>
        <taxon>Gammaproteobacteria</taxon>
        <taxon>Enterobacterales</taxon>
        <taxon>Yersiniaceae</taxon>
        <taxon>Yersinia</taxon>
    </lineage>
</organism>
<name>PYRB_YERE8</name>
<proteinExistence type="inferred from homology"/>
<gene>
    <name evidence="1" type="primary">pyrB</name>
    <name type="ordered locus">YE3766</name>
</gene>
<evidence type="ECO:0000255" key="1">
    <source>
        <dbReference type="HAMAP-Rule" id="MF_00001"/>
    </source>
</evidence>
<comment type="function">
    <text evidence="1">Catalyzes the condensation of carbamoyl phosphate and aspartate to form carbamoyl aspartate and inorganic phosphate, the committed step in the de novo pyrimidine nucleotide biosynthesis pathway.</text>
</comment>
<comment type="catalytic activity">
    <reaction evidence="1">
        <text>carbamoyl phosphate + L-aspartate = N-carbamoyl-L-aspartate + phosphate + H(+)</text>
        <dbReference type="Rhea" id="RHEA:20013"/>
        <dbReference type="ChEBI" id="CHEBI:15378"/>
        <dbReference type="ChEBI" id="CHEBI:29991"/>
        <dbReference type="ChEBI" id="CHEBI:32814"/>
        <dbReference type="ChEBI" id="CHEBI:43474"/>
        <dbReference type="ChEBI" id="CHEBI:58228"/>
        <dbReference type="EC" id="2.1.3.2"/>
    </reaction>
</comment>
<comment type="pathway">
    <text evidence="1">Pyrimidine metabolism; UMP biosynthesis via de novo pathway; (S)-dihydroorotate from bicarbonate: step 2/3.</text>
</comment>
<comment type="subunit">
    <text evidence="1">Heterododecamer (2C3:3R2) of six catalytic PyrB chains organized as two trimers (C3), and six regulatory PyrI chains organized as three dimers (R2).</text>
</comment>
<comment type="similarity">
    <text evidence="1">Belongs to the aspartate/ornithine carbamoyltransferase superfamily. ATCase family.</text>
</comment>
<accession>A1JRD5</accession>
<keyword id="KW-0665">Pyrimidine biosynthesis</keyword>
<keyword id="KW-0808">Transferase</keyword>
<feature type="chain" id="PRO_0000301641" description="Aspartate carbamoyltransferase catalytic subunit">
    <location>
        <begin position="1"/>
        <end position="311"/>
    </location>
</feature>
<feature type="binding site" evidence="1">
    <location>
        <position position="55"/>
    </location>
    <ligand>
        <name>carbamoyl phosphate</name>
        <dbReference type="ChEBI" id="CHEBI:58228"/>
    </ligand>
</feature>
<feature type="binding site" evidence="1">
    <location>
        <position position="56"/>
    </location>
    <ligand>
        <name>carbamoyl phosphate</name>
        <dbReference type="ChEBI" id="CHEBI:58228"/>
    </ligand>
</feature>
<feature type="binding site" evidence="1">
    <location>
        <position position="85"/>
    </location>
    <ligand>
        <name>L-aspartate</name>
        <dbReference type="ChEBI" id="CHEBI:29991"/>
    </ligand>
</feature>
<feature type="binding site" evidence="1">
    <location>
        <position position="106"/>
    </location>
    <ligand>
        <name>carbamoyl phosphate</name>
        <dbReference type="ChEBI" id="CHEBI:58228"/>
    </ligand>
</feature>
<feature type="binding site" evidence="1">
    <location>
        <position position="135"/>
    </location>
    <ligand>
        <name>carbamoyl phosphate</name>
        <dbReference type="ChEBI" id="CHEBI:58228"/>
    </ligand>
</feature>
<feature type="binding site" evidence="1">
    <location>
        <position position="138"/>
    </location>
    <ligand>
        <name>carbamoyl phosphate</name>
        <dbReference type="ChEBI" id="CHEBI:58228"/>
    </ligand>
</feature>
<feature type="binding site" evidence="1">
    <location>
        <position position="168"/>
    </location>
    <ligand>
        <name>L-aspartate</name>
        <dbReference type="ChEBI" id="CHEBI:29991"/>
    </ligand>
</feature>
<feature type="binding site" evidence="1">
    <location>
        <position position="230"/>
    </location>
    <ligand>
        <name>L-aspartate</name>
        <dbReference type="ChEBI" id="CHEBI:29991"/>
    </ligand>
</feature>
<feature type="binding site" evidence="1">
    <location>
        <position position="268"/>
    </location>
    <ligand>
        <name>carbamoyl phosphate</name>
        <dbReference type="ChEBI" id="CHEBI:58228"/>
    </ligand>
</feature>
<feature type="binding site" evidence="1">
    <location>
        <position position="269"/>
    </location>
    <ligand>
        <name>carbamoyl phosphate</name>
        <dbReference type="ChEBI" id="CHEBI:58228"/>
    </ligand>
</feature>
<dbReference type="EC" id="2.1.3.2" evidence="1"/>
<dbReference type="EMBL" id="AM286415">
    <property type="protein sequence ID" value="CAL13790.1"/>
    <property type="molecule type" value="Genomic_DNA"/>
</dbReference>
<dbReference type="RefSeq" id="WP_011817264.1">
    <property type="nucleotide sequence ID" value="NC_008800.1"/>
</dbReference>
<dbReference type="RefSeq" id="YP_001007918.1">
    <property type="nucleotide sequence ID" value="NC_008800.1"/>
</dbReference>
<dbReference type="SMR" id="A1JRD5"/>
<dbReference type="KEGG" id="yen:YE3766"/>
<dbReference type="PATRIC" id="fig|393305.7.peg.4011"/>
<dbReference type="eggNOG" id="COG0540">
    <property type="taxonomic scope" value="Bacteria"/>
</dbReference>
<dbReference type="HOGENOM" id="CLU_043846_1_2_6"/>
<dbReference type="OrthoDB" id="9774690at2"/>
<dbReference type="UniPathway" id="UPA00070">
    <property type="reaction ID" value="UER00116"/>
</dbReference>
<dbReference type="Proteomes" id="UP000000642">
    <property type="component" value="Chromosome"/>
</dbReference>
<dbReference type="GO" id="GO:0005829">
    <property type="term" value="C:cytosol"/>
    <property type="evidence" value="ECO:0007669"/>
    <property type="project" value="TreeGrafter"/>
</dbReference>
<dbReference type="GO" id="GO:0016597">
    <property type="term" value="F:amino acid binding"/>
    <property type="evidence" value="ECO:0007669"/>
    <property type="project" value="InterPro"/>
</dbReference>
<dbReference type="GO" id="GO:0004070">
    <property type="term" value="F:aspartate carbamoyltransferase activity"/>
    <property type="evidence" value="ECO:0007669"/>
    <property type="project" value="UniProtKB-UniRule"/>
</dbReference>
<dbReference type="GO" id="GO:0006207">
    <property type="term" value="P:'de novo' pyrimidine nucleobase biosynthetic process"/>
    <property type="evidence" value="ECO:0007669"/>
    <property type="project" value="InterPro"/>
</dbReference>
<dbReference type="GO" id="GO:0044205">
    <property type="term" value="P:'de novo' UMP biosynthetic process"/>
    <property type="evidence" value="ECO:0007669"/>
    <property type="project" value="UniProtKB-UniRule"/>
</dbReference>
<dbReference type="GO" id="GO:0006520">
    <property type="term" value="P:amino acid metabolic process"/>
    <property type="evidence" value="ECO:0007669"/>
    <property type="project" value="InterPro"/>
</dbReference>
<dbReference type="FunFam" id="3.40.50.1370:FF:000001">
    <property type="entry name" value="Aspartate carbamoyltransferase"/>
    <property type="match status" value="1"/>
</dbReference>
<dbReference type="FunFam" id="3.40.50.1370:FF:000002">
    <property type="entry name" value="Aspartate carbamoyltransferase 2"/>
    <property type="match status" value="1"/>
</dbReference>
<dbReference type="Gene3D" id="3.40.50.1370">
    <property type="entry name" value="Aspartate/ornithine carbamoyltransferase"/>
    <property type="match status" value="2"/>
</dbReference>
<dbReference type="HAMAP" id="MF_00001">
    <property type="entry name" value="Asp_carb_tr"/>
    <property type="match status" value="1"/>
</dbReference>
<dbReference type="InterPro" id="IPR006132">
    <property type="entry name" value="Asp/Orn_carbamoyltranf_P-bd"/>
</dbReference>
<dbReference type="InterPro" id="IPR006130">
    <property type="entry name" value="Asp/Orn_carbamoylTrfase"/>
</dbReference>
<dbReference type="InterPro" id="IPR036901">
    <property type="entry name" value="Asp/Orn_carbamoylTrfase_sf"/>
</dbReference>
<dbReference type="InterPro" id="IPR002082">
    <property type="entry name" value="Asp_carbamoyltransf"/>
</dbReference>
<dbReference type="InterPro" id="IPR006131">
    <property type="entry name" value="Asp_carbamoyltransf_Asp/Orn-bd"/>
</dbReference>
<dbReference type="NCBIfam" id="TIGR00670">
    <property type="entry name" value="asp_carb_tr"/>
    <property type="match status" value="1"/>
</dbReference>
<dbReference type="NCBIfam" id="NF002032">
    <property type="entry name" value="PRK00856.1"/>
    <property type="match status" value="1"/>
</dbReference>
<dbReference type="PANTHER" id="PTHR45753:SF6">
    <property type="entry name" value="ASPARTATE CARBAMOYLTRANSFERASE"/>
    <property type="match status" value="1"/>
</dbReference>
<dbReference type="PANTHER" id="PTHR45753">
    <property type="entry name" value="ORNITHINE CARBAMOYLTRANSFERASE, MITOCHONDRIAL"/>
    <property type="match status" value="1"/>
</dbReference>
<dbReference type="Pfam" id="PF00185">
    <property type="entry name" value="OTCace"/>
    <property type="match status" value="1"/>
</dbReference>
<dbReference type="Pfam" id="PF02729">
    <property type="entry name" value="OTCace_N"/>
    <property type="match status" value="1"/>
</dbReference>
<dbReference type="PRINTS" id="PR00100">
    <property type="entry name" value="AOTCASE"/>
</dbReference>
<dbReference type="PRINTS" id="PR00101">
    <property type="entry name" value="ATCASE"/>
</dbReference>
<dbReference type="SUPFAM" id="SSF53671">
    <property type="entry name" value="Aspartate/ornithine carbamoyltransferase"/>
    <property type="match status" value="1"/>
</dbReference>
<dbReference type="PROSITE" id="PS00097">
    <property type="entry name" value="CARBAMOYLTRANSFERASE"/>
    <property type="match status" value="1"/>
</dbReference>